<sequence>PPERRKPREEGLRHCLQIGVEALKARKSPLDVVELVVRELENNEHFNAGIGSVLTNSGTVEMEASIMDGKSMKCGAVSGLSTVLNPISLARLVMEKTPHMYLAFQGAQDFAKQQGVETVDSSHFITAENVERLKLAIEANRVQIDYSQYNYTQPVQDDAEKELPVANGDSQIGTVGCVAVDSQGNLASATSTGGLVNKMVGRIGDTPLIGAGTYANELCAVSATGKGEAIIQATVARDVAALMEFKGLSLKEAADYVVHERTPKGTVGLIAVSAAGEIAMPFNTTGMFRACATEDGNSEIAIWPPA</sequence>
<reference key="1">
    <citation type="journal article" date="1992" name="Plant Mol. Biol.">
        <title>The isolation and characterisation of a cDNA clone encoding L-asparaginase from developing seeds of lupin (Lupinus arboreus).</title>
        <authorList>
            <person name="Lough T.J."/>
            <person name="Reddington B.D."/>
            <person name="Grant M.R."/>
            <person name="Hill D.F."/>
            <person name="Reynolds P.H.S."/>
            <person name="Farnden K.J.F."/>
        </authorList>
    </citation>
    <scope>NUCLEOTIDE SEQUENCE [MRNA]</scope>
    <source>
        <tissue>Seed</tissue>
    </source>
</reference>
<accession>P30362</accession>
<organism>
    <name type="scientific">Lupinus arboreus</name>
    <name type="common">Tree lupine</name>
    <dbReference type="NCBI Taxonomy" id="3872"/>
    <lineage>
        <taxon>Eukaryota</taxon>
        <taxon>Viridiplantae</taxon>
        <taxon>Streptophyta</taxon>
        <taxon>Embryophyta</taxon>
        <taxon>Tracheophyta</taxon>
        <taxon>Spermatophyta</taxon>
        <taxon>Magnoliopsida</taxon>
        <taxon>eudicotyledons</taxon>
        <taxon>Gunneridae</taxon>
        <taxon>Pentapetalae</taxon>
        <taxon>rosids</taxon>
        <taxon>fabids</taxon>
        <taxon>Fabales</taxon>
        <taxon>Fabaceae</taxon>
        <taxon>Papilionoideae</taxon>
        <taxon>50 kb inversion clade</taxon>
        <taxon>genistoids sensu lato</taxon>
        <taxon>core genistoids</taxon>
        <taxon>Genisteae</taxon>
        <taxon>Lupinus</taxon>
    </lineage>
</organism>
<keyword id="KW-0068">Autocatalytic cleavage</keyword>
<keyword id="KW-0378">Hydrolase</keyword>
<keyword id="KW-0645">Protease</keyword>
<evidence type="ECO:0000250" key="1"/>
<evidence type="ECO:0000305" key="2"/>
<comment type="function">
    <text>Degrades proteins damaged by L-isoaspartyl residue formation (also known as beta-Asp residues). Also has L-asparaginase activity, which is used to liberate stored nitrogen during seed development.</text>
</comment>
<comment type="catalytic activity">
    <reaction>
        <text>Cleavage of a beta-linked Asp residue from the N-terminus of a polypeptide.</text>
        <dbReference type="EC" id="3.4.19.5"/>
    </reaction>
</comment>
<comment type="subunit">
    <text>Heterotetramer of two alpha and two beta chains arranged as a dimer of alpha/beta heterodimers.</text>
</comment>
<comment type="tissue specificity">
    <text>Developing seeds.</text>
</comment>
<comment type="PTM">
    <text evidence="1">Cleaved into an alpha and beta chain by autocatalysis; this activates the enzyme. The N-terminal residue of the beta subunit is responsible for the nucleophile hydrolase activity (By similarity).</text>
</comment>
<comment type="similarity">
    <text evidence="2">Belongs to the Ntn-hydrolase family.</text>
</comment>
<dbReference type="EC" id="3.4.19.5"/>
<dbReference type="EMBL" id="X52588">
    <property type="protein sequence ID" value="CAA36824.1"/>
    <property type="molecule type" value="mRNA"/>
</dbReference>
<dbReference type="PIR" id="S22523">
    <property type="entry name" value="S22523"/>
</dbReference>
<dbReference type="SMR" id="P30362"/>
<dbReference type="MEROPS" id="T02.A01"/>
<dbReference type="GO" id="GO:0008798">
    <property type="term" value="F:beta-aspartyl-peptidase activity"/>
    <property type="evidence" value="ECO:0007669"/>
    <property type="project" value="UniProtKB-EC"/>
</dbReference>
<dbReference type="GO" id="GO:0016811">
    <property type="term" value="F:hydrolase activity, acting on carbon-nitrogen (but not peptide) bonds, in linear amides"/>
    <property type="evidence" value="ECO:0007669"/>
    <property type="project" value="UniProtKB-ARBA"/>
</dbReference>
<dbReference type="GO" id="GO:0006508">
    <property type="term" value="P:proteolysis"/>
    <property type="evidence" value="ECO:0007669"/>
    <property type="project" value="UniProtKB-KW"/>
</dbReference>
<dbReference type="CDD" id="cd04701">
    <property type="entry name" value="Asparaginase_2"/>
    <property type="match status" value="1"/>
</dbReference>
<dbReference type="FunFam" id="3.60.20.30:FF:000001">
    <property type="entry name" value="Isoaspartyl peptidase/L-asparaginase"/>
    <property type="match status" value="1"/>
</dbReference>
<dbReference type="Gene3D" id="3.60.20.30">
    <property type="entry name" value="(Glycosyl)asparaginase"/>
    <property type="match status" value="1"/>
</dbReference>
<dbReference type="InterPro" id="IPR029055">
    <property type="entry name" value="Ntn_hydrolases_N"/>
</dbReference>
<dbReference type="InterPro" id="IPR000246">
    <property type="entry name" value="Peptidase_T2"/>
</dbReference>
<dbReference type="PANTHER" id="PTHR10188">
    <property type="entry name" value="L-ASPARAGINASE"/>
    <property type="match status" value="1"/>
</dbReference>
<dbReference type="PANTHER" id="PTHR10188:SF6">
    <property type="entry name" value="N(4)-(BETA-N-ACETYLGLUCOSAMINYL)-L-ASPARAGINASE"/>
    <property type="match status" value="1"/>
</dbReference>
<dbReference type="Pfam" id="PF01112">
    <property type="entry name" value="Asparaginase_2"/>
    <property type="match status" value="1"/>
</dbReference>
<dbReference type="SUPFAM" id="SSF56235">
    <property type="entry name" value="N-terminal nucleophile aminohydrolases (Ntn hydrolases)"/>
    <property type="match status" value="1"/>
</dbReference>
<name>ASPG_LUPAR</name>
<proteinExistence type="evidence at transcript level"/>
<feature type="chain" id="PRO_0000045454" description="Isoaspartyl peptidase/L-asparaginase subunit alpha">
    <location>
        <begin position="1" status="less than"/>
        <end position="173"/>
    </location>
</feature>
<feature type="chain" id="PRO_0000045455" description="Isoaspartyl peptidase/L-asparaginase subunit beta">
    <location>
        <begin position="174"/>
        <end position="306"/>
    </location>
</feature>
<feature type="active site" description="Nucleophile" evidence="1">
    <location>
        <position position="174"/>
    </location>
</feature>
<feature type="binding site" evidence="1">
    <location>
        <begin position="202"/>
        <end position="205"/>
    </location>
    <ligand>
        <name>substrate</name>
    </ligand>
</feature>
<feature type="binding site" evidence="1">
    <location>
        <begin position="224"/>
        <end position="227"/>
    </location>
    <ligand>
        <name>substrate</name>
    </ligand>
</feature>
<feature type="site" description="Cleavage; by autolysis" evidence="1">
    <location>
        <begin position="173"/>
        <end position="174"/>
    </location>
</feature>
<feature type="non-terminal residue">
    <location>
        <position position="1"/>
    </location>
</feature>
<protein>
    <recommendedName>
        <fullName>Isoaspartyl peptidase/L-asparaginase</fullName>
        <ecNumber>3.4.19.5</ecNumber>
    </recommendedName>
    <alternativeName>
        <fullName>L-asparagine amidohydrolase</fullName>
    </alternativeName>
    <component>
        <recommendedName>
            <fullName>Isoaspartyl peptidase/L-asparaginase subunit alpha</fullName>
        </recommendedName>
    </component>
    <component>
        <recommendedName>
            <fullName>Isoaspartyl peptidase/L-asparaginase subunit beta</fullName>
        </recommendedName>
    </component>
</protein>